<accession>P21755</accession>
<dbReference type="PIR" id="A39091">
    <property type="entry name" value="A39091"/>
</dbReference>
<dbReference type="SMR" id="P21755"/>
<dbReference type="GO" id="GO:0005576">
    <property type="term" value="C:extracellular region"/>
    <property type="evidence" value="ECO:0007669"/>
    <property type="project" value="UniProtKB-SubCell"/>
</dbReference>
<dbReference type="GO" id="GO:0030246">
    <property type="term" value="F:carbohydrate binding"/>
    <property type="evidence" value="ECO:0007669"/>
    <property type="project" value="UniProtKB-KW"/>
</dbReference>
<dbReference type="GO" id="GO:0019834">
    <property type="term" value="F:phospholipase A2 inhibitor activity"/>
    <property type="evidence" value="ECO:0007669"/>
    <property type="project" value="UniProtKB-KW"/>
</dbReference>
<dbReference type="Gene3D" id="3.10.100.10">
    <property type="entry name" value="Mannose-Binding Protein A, subunit A"/>
    <property type="match status" value="1"/>
</dbReference>
<dbReference type="InterPro" id="IPR001304">
    <property type="entry name" value="C-type_lectin-like"/>
</dbReference>
<dbReference type="InterPro" id="IPR016186">
    <property type="entry name" value="C-type_lectin-like/link_sf"/>
</dbReference>
<dbReference type="InterPro" id="IPR018378">
    <property type="entry name" value="C-type_lectin_CS"/>
</dbReference>
<dbReference type="InterPro" id="IPR016187">
    <property type="entry name" value="CTDL_fold"/>
</dbReference>
<dbReference type="Pfam" id="PF00059">
    <property type="entry name" value="Lectin_C"/>
    <property type="match status" value="1"/>
</dbReference>
<dbReference type="SUPFAM" id="SSF56436">
    <property type="entry name" value="C-type lectin-like"/>
    <property type="match status" value="1"/>
</dbReference>
<dbReference type="PROSITE" id="PS00615">
    <property type="entry name" value="C_TYPE_LECTIN_1"/>
    <property type="match status" value="1"/>
</dbReference>
<dbReference type="PROSITE" id="PS50041">
    <property type="entry name" value="C_TYPE_LECTIN_2"/>
    <property type="match status" value="1"/>
</dbReference>
<proteinExistence type="evidence at protein level"/>
<comment type="function">
    <text evidence="3">PLI binds directly phospholipase A2 in the presence or absence of calcium. Inhibitory activity of the PLI-A homotrimer is more specific than that of the PLI-B homotrimer.</text>
</comment>
<comment type="subunit">
    <text evidence="2">Homo- or heterotrimer; homotrimer of PLI-A chains, two PLI-A and one PLI-B chains, one PLI-A and two PLI-B chains, and homotrimer of PLI-B chains (with a ratio of 1:3:3:1).</text>
</comment>
<comment type="subcellular location">
    <subcellularLocation>
        <location evidence="3">Secreted</location>
    </subcellularLocation>
    <text evidence="3">Secreted in plasma.</text>
</comment>
<comment type="tissue specificity">
    <text>Expressed by the liver.</text>
</comment>
<comment type="similarity">
    <text evidence="4">Belongs to the alpha-type phospholipase A2 inhibitor family.</text>
</comment>
<organism>
    <name type="scientific">Protobothrops flavoviridis</name>
    <name type="common">Habu</name>
    <name type="synonym">Trimeresurus flavoviridis</name>
    <dbReference type="NCBI Taxonomy" id="88087"/>
    <lineage>
        <taxon>Eukaryota</taxon>
        <taxon>Metazoa</taxon>
        <taxon>Chordata</taxon>
        <taxon>Craniata</taxon>
        <taxon>Vertebrata</taxon>
        <taxon>Euteleostomi</taxon>
        <taxon>Lepidosauria</taxon>
        <taxon>Squamata</taxon>
        <taxon>Bifurcata</taxon>
        <taxon>Unidentata</taxon>
        <taxon>Episquamata</taxon>
        <taxon>Toxicofera</taxon>
        <taxon>Serpentes</taxon>
        <taxon>Colubroidea</taxon>
        <taxon>Viperidae</taxon>
        <taxon>Crotalinae</taxon>
        <taxon>Protobothrops</taxon>
    </lineage>
</organism>
<protein>
    <recommendedName>
        <fullName>Phospholipase A2 inhibitor subunit A</fullName>
        <shortName>alpha-PLI A</shortName>
    </recommendedName>
</protein>
<keyword id="KW-0106">Calcium</keyword>
<keyword id="KW-0903">Direct protein sequencing</keyword>
<keyword id="KW-1015">Disulfide bond</keyword>
<keyword id="KW-0325">Glycoprotein</keyword>
<keyword id="KW-0430">Lectin</keyword>
<keyword id="KW-0593">Phospholipase A2 inhibitor</keyword>
<keyword id="KW-0964">Secreted</keyword>
<feature type="chain" id="PRO_0000046694" description="Phospholipase A2 inhibitor subunit A">
    <location>
        <begin position="1"/>
        <end position="147"/>
    </location>
</feature>
<feature type="domain" description="C-type lectin" evidence="1">
    <location>
        <begin position="62"/>
        <end position="143"/>
    </location>
</feature>
<feature type="glycosylation site" description="N-linked (GlcNAc...) asparagine">
    <location>
        <position position="103"/>
    </location>
</feature>
<feature type="disulfide bond" evidence="3">
    <location>
        <begin position="64"/>
        <end position="141"/>
    </location>
</feature>
<feature type="disulfide bond" evidence="3">
    <location>
        <begin position="119"/>
        <end position="133"/>
    </location>
</feature>
<reference key="1">
    <citation type="journal article" date="1991" name="J. Biol. Chem.">
        <title>Amino acid sequences of the two subunits of a phospholipase A2 inhibitor from the blood plasma of Trimeresurus flavoviridis. Sequence homologies with pulmonary surfactant apoprotein and animal lectins.</title>
        <authorList>
            <person name="Inoue S."/>
            <person name="Kogaki H."/>
            <person name="Ikeda K."/>
            <person name="Samejima Y."/>
            <person name="Omori-Satoh T."/>
        </authorList>
    </citation>
    <scope>PROTEIN SEQUENCE</scope>
    <scope>FUNCTION</scope>
    <scope>SUBCELLULAR LOCATION</scope>
    <scope>DISULFIDE BOND</scope>
    <source>
        <tissue>Blood</tissue>
    </source>
</reference>
<reference key="2">
    <citation type="journal article" date="2008" name="Toxicon">
        <title>Subunit structure and inhibition specificity of alpha-type phospholipase A2 inhibitor from Protobothrops flavoviridis.</title>
        <authorList>
            <person name="Shimada A."/>
            <person name="Ohkura N."/>
            <person name="Hayashi K."/>
            <person name="Samejima Y."/>
            <person name="Omori-Satoh T."/>
            <person name="Inoue S."/>
            <person name="Ikeda K."/>
        </authorList>
    </citation>
    <scope>SUBUNIT</scope>
</reference>
<evidence type="ECO:0000255" key="1">
    <source>
        <dbReference type="PROSITE-ProRule" id="PRU00040"/>
    </source>
</evidence>
<evidence type="ECO:0000269" key="2">
    <source>
    </source>
</evidence>
<evidence type="ECO:0000269" key="3">
    <source>
    </source>
</evidence>
<evidence type="ECO:0000305" key="4"/>
<name>PLIAA_PROFL</name>
<sequence>HETDPDGQVMSSMIETLMFLQKEYANLRYAFMTVNNARSFGSGSERLYVSNKEIKTFEPLKEICEEAGGHIPSPQLENQNKAFASVLERHNKAAYLVVGDSANFTNWAAGQPNEADGTCVKADTHGSWHSASCDENLLVVCEFYFIL</sequence>